<reference key="1">
    <citation type="journal article" date="2003" name="Proc. Natl. Acad. Sci. U.S.A.">
        <title>The complete genome sequence of the carcinogenic bacterium Helicobacter hepaticus.</title>
        <authorList>
            <person name="Suerbaum S."/>
            <person name="Josenhans C."/>
            <person name="Sterzenbach T."/>
            <person name="Drescher B."/>
            <person name="Brandt P."/>
            <person name="Bell M."/>
            <person name="Droege M."/>
            <person name="Fartmann B."/>
            <person name="Fischer H.-P."/>
            <person name="Ge Z."/>
            <person name="Hoerster A."/>
            <person name="Holland R."/>
            <person name="Klein K."/>
            <person name="Koenig J."/>
            <person name="Macko L."/>
            <person name="Mendz G.L."/>
            <person name="Nyakatura G."/>
            <person name="Schauer D.B."/>
            <person name="Shen Z."/>
            <person name="Weber J."/>
            <person name="Frosch M."/>
            <person name="Fox J.G."/>
        </authorList>
    </citation>
    <scope>NUCLEOTIDE SEQUENCE [LARGE SCALE GENOMIC DNA]</scope>
    <source>
        <strain>ATCC 51449 / 3B1</strain>
    </source>
</reference>
<comment type="subcellular location">
    <subcellularLocation>
        <location evidence="1">Cell membrane</location>
        <topology evidence="1">Lipid-anchor</topology>
    </subcellularLocation>
</comment>
<comment type="similarity">
    <text evidence="1">Belongs to the UPF0323 family.</text>
</comment>
<keyword id="KW-1003">Cell membrane</keyword>
<keyword id="KW-0449">Lipoprotein</keyword>
<keyword id="KW-0472">Membrane</keyword>
<keyword id="KW-0564">Palmitate</keyword>
<keyword id="KW-1185">Reference proteome</keyword>
<keyword id="KW-0732">Signal</keyword>
<evidence type="ECO:0000255" key="1">
    <source>
        <dbReference type="HAMAP-Rule" id="MF_01421"/>
    </source>
</evidence>
<evidence type="ECO:0000256" key="2">
    <source>
        <dbReference type="SAM" id="MobiDB-lite"/>
    </source>
</evidence>
<organism>
    <name type="scientific">Helicobacter hepaticus (strain ATCC 51449 / 3B1)</name>
    <dbReference type="NCBI Taxonomy" id="235279"/>
    <lineage>
        <taxon>Bacteria</taxon>
        <taxon>Pseudomonadati</taxon>
        <taxon>Campylobacterota</taxon>
        <taxon>Epsilonproteobacteria</taxon>
        <taxon>Campylobacterales</taxon>
        <taxon>Helicobacteraceae</taxon>
        <taxon>Helicobacter</taxon>
    </lineage>
</organism>
<sequence>MKHIHKIKNYAMVGGLGVMAVFALNACEQNSGQNNALNNTLQNSQKNGAFVIVEEQNDGSYKVLEEYPSEQTRVMLKDKNGQERLLSQEEIDELIKQEEVAIDSGQSQLTNPNGGGLGLGGAILASAAGAILGSYIGNKLFNNPNYQANSQRNYKSPQAYERSKNSFNSAKTGASGASKTSSGKSGFFGGGNSSQSTSTNRNTGSMGS</sequence>
<gene>
    <name type="ordered locus">HH_0014</name>
</gene>
<protein>
    <recommendedName>
        <fullName evidence="1">UPF0323 lipoprotein HH_0014</fullName>
    </recommendedName>
</protein>
<proteinExistence type="inferred from homology"/>
<feature type="signal peptide" evidence="1">
    <location>
        <begin position="1"/>
        <end position="26"/>
    </location>
</feature>
<feature type="chain" id="PRO_0000036325" description="UPF0323 lipoprotein HH_0014">
    <location>
        <begin position="27"/>
        <end position="208"/>
    </location>
</feature>
<feature type="region of interest" description="Disordered" evidence="2">
    <location>
        <begin position="148"/>
        <end position="208"/>
    </location>
</feature>
<feature type="compositionally biased region" description="Low complexity" evidence="2">
    <location>
        <begin position="169"/>
        <end position="185"/>
    </location>
</feature>
<feature type="compositionally biased region" description="Low complexity" evidence="2">
    <location>
        <begin position="193"/>
        <end position="208"/>
    </location>
</feature>
<feature type="lipid moiety-binding region" description="N-palmitoyl cysteine" evidence="1">
    <location>
        <position position="27"/>
    </location>
</feature>
<feature type="lipid moiety-binding region" description="S-diacylglycerol cysteine" evidence="1">
    <location>
        <position position="27"/>
    </location>
</feature>
<accession>Q7VK78</accession>
<name>Y014_HELHP</name>
<dbReference type="EMBL" id="AE017125">
    <property type="protein sequence ID" value="AAP76611.1"/>
    <property type="molecule type" value="Genomic_DNA"/>
</dbReference>
<dbReference type="RefSeq" id="WP_011114857.1">
    <property type="nucleotide sequence ID" value="NC_004917.1"/>
</dbReference>
<dbReference type="SMR" id="Q7VK78"/>
<dbReference type="STRING" id="235279.HH_0014"/>
<dbReference type="KEGG" id="hhe:HH_0014"/>
<dbReference type="eggNOG" id="ENOG502ZIB8">
    <property type="taxonomic scope" value="Bacteria"/>
</dbReference>
<dbReference type="HOGENOM" id="CLU_111520_0_0_7"/>
<dbReference type="OrthoDB" id="5339730at2"/>
<dbReference type="Proteomes" id="UP000002495">
    <property type="component" value="Chromosome"/>
</dbReference>
<dbReference type="GO" id="GO:0005886">
    <property type="term" value="C:plasma membrane"/>
    <property type="evidence" value="ECO:0007669"/>
    <property type="project" value="UniProtKB-SubCell"/>
</dbReference>
<dbReference type="HAMAP" id="MF_01421">
    <property type="entry name" value="UPF0323"/>
    <property type="match status" value="1"/>
</dbReference>
<dbReference type="InterPro" id="IPR020913">
    <property type="entry name" value="UPF0323"/>
</dbReference>
<dbReference type="NCBIfam" id="NF003146">
    <property type="entry name" value="PRK04081.1"/>
    <property type="match status" value="1"/>
</dbReference>